<accession>A9M845</accession>
<name>SYL_BRUC2</name>
<keyword id="KW-0030">Aminoacyl-tRNA synthetase</keyword>
<keyword id="KW-0067">ATP-binding</keyword>
<keyword id="KW-0963">Cytoplasm</keyword>
<keyword id="KW-0436">Ligase</keyword>
<keyword id="KW-0547">Nucleotide-binding</keyword>
<keyword id="KW-0648">Protein biosynthesis</keyword>
<keyword id="KW-1185">Reference proteome</keyword>
<dbReference type="EC" id="6.1.1.4" evidence="1"/>
<dbReference type="EMBL" id="CP000872">
    <property type="protein sequence ID" value="ABX62843.1"/>
    <property type="molecule type" value="Genomic_DNA"/>
</dbReference>
<dbReference type="RefSeq" id="WP_004692813.1">
    <property type="nucleotide sequence ID" value="NC_010103.1"/>
</dbReference>
<dbReference type="SMR" id="A9M845"/>
<dbReference type="GeneID" id="55591405"/>
<dbReference type="KEGG" id="bcs:BCAN_A1845"/>
<dbReference type="HOGENOM" id="CLU_004427_0_0_5"/>
<dbReference type="PhylomeDB" id="A9M845"/>
<dbReference type="Proteomes" id="UP000001385">
    <property type="component" value="Chromosome I"/>
</dbReference>
<dbReference type="GO" id="GO:0005829">
    <property type="term" value="C:cytosol"/>
    <property type="evidence" value="ECO:0007669"/>
    <property type="project" value="TreeGrafter"/>
</dbReference>
<dbReference type="GO" id="GO:0002161">
    <property type="term" value="F:aminoacyl-tRNA deacylase activity"/>
    <property type="evidence" value="ECO:0007669"/>
    <property type="project" value="InterPro"/>
</dbReference>
<dbReference type="GO" id="GO:0005524">
    <property type="term" value="F:ATP binding"/>
    <property type="evidence" value="ECO:0007669"/>
    <property type="project" value="UniProtKB-UniRule"/>
</dbReference>
<dbReference type="GO" id="GO:0004823">
    <property type="term" value="F:leucine-tRNA ligase activity"/>
    <property type="evidence" value="ECO:0007669"/>
    <property type="project" value="UniProtKB-UniRule"/>
</dbReference>
<dbReference type="GO" id="GO:0006429">
    <property type="term" value="P:leucyl-tRNA aminoacylation"/>
    <property type="evidence" value="ECO:0007669"/>
    <property type="project" value="UniProtKB-UniRule"/>
</dbReference>
<dbReference type="CDD" id="cd07958">
    <property type="entry name" value="Anticodon_Ia_Leu_BEm"/>
    <property type="match status" value="1"/>
</dbReference>
<dbReference type="CDD" id="cd00812">
    <property type="entry name" value="LeuRS_core"/>
    <property type="match status" value="1"/>
</dbReference>
<dbReference type="FunFam" id="1.10.730.10:FF:000002">
    <property type="entry name" value="Leucine--tRNA ligase"/>
    <property type="match status" value="1"/>
</dbReference>
<dbReference type="FunFam" id="3.40.50.620:FF:000003">
    <property type="entry name" value="Leucine--tRNA ligase"/>
    <property type="match status" value="1"/>
</dbReference>
<dbReference type="Gene3D" id="2.20.28.290">
    <property type="match status" value="1"/>
</dbReference>
<dbReference type="Gene3D" id="3.10.20.590">
    <property type="match status" value="1"/>
</dbReference>
<dbReference type="Gene3D" id="3.40.50.620">
    <property type="entry name" value="HUPs"/>
    <property type="match status" value="2"/>
</dbReference>
<dbReference type="Gene3D" id="1.10.730.10">
    <property type="entry name" value="Isoleucyl-tRNA Synthetase, Domain 1"/>
    <property type="match status" value="1"/>
</dbReference>
<dbReference type="Gene3D" id="3.90.740.10">
    <property type="entry name" value="Valyl/Leucyl/Isoleucyl-tRNA synthetase, editing domain"/>
    <property type="match status" value="1"/>
</dbReference>
<dbReference type="HAMAP" id="MF_00049_B">
    <property type="entry name" value="Leu_tRNA_synth_B"/>
    <property type="match status" value="1"/>
</dbReference>
<dbReference type="InterPro" id="IPR001412">
    <property type="entry name" value="aa-tRNA-synth_I_CS"/>
</dbReference>
<dbReference type="InterPro" id="IPR002300">
    <property type="entry name" value="aa-tRNA-synth_Ia"/>
</dbReference>
<dbReference type="InterPro" id="IPR002302">
    <property type="entry name" value="Leu-tRNA-ligase"/>
</dbReference>
<dbReference type="InterPro" id="IPR025709">
    <property type="entry name" value="Leu_tRNA-synth_edit"/>
</dbReference>
<dbReference type="InterPro" id="IPR013155">
    <property type="entry name" value="M/V/L/I-tRNA-synth_anticd-bd"/>
</dbReference>
<dbReference type="InterPro" id="IPR015413">
    <property type="entry name" value="Methionyl/Leucyl_tRNA_Synth"/>
</dbReference>
<dbReference type="InterPro" id="IPR014729">
    <property type="entry name" value="Rossmann-like_a/b/a_fold"/>
</dbReference>
<dbReference type="InterPro" id="IPR009080">
    <property type="entry name" value="tRNAsynth_Ia_anticodon-bd"/>
</dbReference>
<dbReference type="InterPro" id="IPR009008">
    <property type="entry name" value="Val/Leu/Ile-tRNA-synth_edit"/>
</dbReference>
<dbReference type="NCBIfam" id="TIGR00396">
    <property type="entry name" value="leuS_bact"/>
    <property type="match status" value="1"/>
</dbReference>
<dbReference type="PANTHER" id="PTHR43740:SF2">
    <property type="entry name" value="LEUCINE--TRNA LIGASE, MITOCHONDRIAL"/>
    <property type="match status" value="1"/>
</dbReference>
<dbReference type="PANTHER" id="PTHR43740">
    <property type="entry name" value="LEUCYL-TRNA SYNTHETASE"/>
    <property type="match status" value="1"/>
</dbReference>
<dbReference type="Pfam" id="PF08264">
    <property type="entry name" value="Anticodon_1"/>
    <property type="match status" value="1"/>
</dbReference>
<dbReference type="Pfam" id="PF00133">
    <property type="entry name" value="tRNA-synt_1"/>
    <property type="match status" value="2"/>
</dbReference>
<dbReference type="Pfam" id="PF13603">
    <property type="entry name" value="tRNA-synt_1_2"/>
    <property type="match status" value="1"/>
</dbReference>
<dbReference type="Pfam" id="PF09334">
    <property type="entry name" value="tRNA-synt_1g"/>
    <property type="match status" value="1"/>
</dbReference>
<dbReference type="PRINTS" id="PR00985">
    <property type="entry name" value="TRNASYNTHLEU"/>
</dbReference>
<dbReference type="SUPFAM" id="SSF47323">
    <property type="entry name" value="Anticodon-binding domain of a subclass of class I aminoacyl-tRNA synthetases"/>
    <property type="match status" value="1"/>
</dbReference>
<dbReference type="SUPFAM" id="SSF52374">
    <property type="entry name" value="Nucleotidylyl transferase"/>
    <property type="match status" value="1"/>
</dbReference>
<dbReference type="SUPFAM" id="SSF50677">
    <property type="entry name" value="ValRS/IleRS/LeuRS editing domain"/>
    <property type="match status" value="1"/>
</dbReference>
<dbReference type="PROSITE" id="PS00178">
    <property type="entry name" value="AA_TRNA_LIGASE_I"/>
    <property type="match status" value="1"/>
</dbReference>
<evidence type="ECO:0000255" key="1">
    <source>
        <dbReference type="HAMAP-Rule" id="MF_00049"/>
    </source>
</evidence>
<sequence>MAAERYNPRVAEAHWQKVWEENRTFETDNSDSREKYYVLEMFPYPSGRIHMGHVRNYAMGDVVARYKRAKGFNVLHPMGWDAFGMPAENAAMQNKVHPKEWTYQNIATMKRQLKSMGLSLDWSREFATCDVEYYHRQQMLFIDLYEKGLVTRKTSKVNWDPVDNTVLANEQVVDGRGWRSGALVEQRELTQWFFKITDFSEELLAGLDTLDQWPEKVRLMQRNWIGKSEGLQVRLALAAGTAPAGFSEVEVYTTRPDTLFGAAFVAISADHPLAKKLSEGNAALSSFIEECHQQGTSLAALETAEKKGFDTGIKVKHPFDDNWELPVYVANFVLMEYGTGAVFGCPAHDQRDLDFANKYKLKVTPVVLPKGEDAASFSIGETAYTDDGVMINSRFLDGMTPAAAFNEVASRLEKTDLVGRPQAVRKVQFRLRDWGISRQRYWGCPIPMIHCESCGVNPVPRADLPVKLPDDVEFDRPGNPLDRHATWRHVKCPKCGGDARRETDTMDTFVDSSWYYTRFTAPWENEPTDRKAADHWLPVDQYIGGIEHAILHLLYSRFFTRAMKVAGHVGVDEPFKGLFTQGMVVHETYKANGQWVSPADIRIEEIDGKRVATMLDSGAPVEIGSIEKMSKSKKNVVDPDDIIASYGADIARWFVLSDSPPERDVIWTEAGAEGAHRFVQRIWRLVAEAAPALKDVAPKAGTQGEALGVSKAAHKAVKAVGDDIEKLAFNRGVARLYELVNTLSGALQQAADGKADAEMKGALREATEMLVLMTAPMMPHLAEQCLAELGGKVAGKETLVARAPWPVFDPALVVENEIVLPVQINGKKRGDLTIARDADQASIQQAVLELDFVKAALNGGSPKKIIVVPQRIVNVVA</sequence>
<reference key="1">
    <citation type="submission" date="2007-10" db="EMBL/GenBank/DDBJ databases">
        <title>Brucella canis ATCC 23365 whole genome shotgun sequencing project.</title>
        <authorList>
            <person name="Setubal J.C."/>
            <person name="Bowns C."/>
            <person name="Boyle S."/>
            <person name="Crasta O.R."/>
            <person name="Czar M.J."/>
            <person name="Dharmanolla C."/>
            <person name="Gillespie J.J."/>
            <person name="Kenyon R.W."/>
            <person name="Lu J."/>
            <person name="Mane S."/>
            <person name="Mohapatra S."/>
            <person name="Nagrani S."/>
            <person name="Purkayastha A."/>
            <person name="Rajasimha H.K."/>
            <person name="Shallom J.M."/>
            <person name="Shallom S."/>
            <person name="Shukla M."/>
            <person name="Snyder E.E."/>
            <person name="Sobral B.W."/>
            <person name="Wattam A.R."/>
            <person name="Will R."/>
            <person name="Williams K."/>
            <person name="Yoo H."/>
            <person name="Bruce D."/>
            <person name="Detter C."/>
            <person name="Munk C."/>
            <person name="Brettin T.S."/>
        </authorList>
    </citation>
    <scope>NUCLEOTIDE SEQUENCE [LARGE SCALE GENOMIC DNA]</scope>
    <source>
        <strain>ATCC 23365 / NCTC 10854 / RM-666</strain>
    </source>
</reference>
<organism>
    <name type="scientific">Brucella canis (strain ATCC 23365 / NCTC 10854 / RM-666)</name>
    <dbReference type="NCBI Taxonomy" id="483179"/>
    <lineage>
        <taxon>Bacteria</taxon>
        <taxon>Pseudomonadati</taxon>
        <taxon>Pseudomonadota</taxon>
        <taxon>Alphaproteobacteria</taxon>
        <taxon>Hyphomicrobiales</taxon>
        <taxon>Brucellaceae</taxon>
        <taxon>Brucella/Ochrobactrum group</taxon>
        <taxon>Brucella</taxon>
    </lineage>
</organism>
<comment type="catalytic activity">
    <reaction evidence="1">
        <text>tRNA(Leu) + L-leucine + ATP = L-leucyl-tRNA(Leu) + AMP + diphosphate</text>
        <dbReference type="Rhea" id="RHEA:11688"/>
        <dbReference type="Rhea" id="RHEA-COMP:9613"/>
        <dbReference type="Rhea" id="RHEA-COMP:9622"/>
        <dbReference type="ChEBI" id="CHEBI:30616"/>
        <dbReference type="ChEBI" id="CHEBI:33019"/>
        <dbReference type="ChEBI" id="CHEBI:57427"/>
        <dbReference type="ChEBI" id="CHEBI:78442"/>
        <dbReference type="ChEBI" id="CHEBI:78494"/>
        <dbReference type="ChEBI" id="CHEBI:456215"/>
        <dbReference type="EC" id="6.1.1.4"/>
    </reaction>
</comment>
<comment type="subcellular location">
    <subcellularLocation>
        <location evidence="1">Cytoplasm</location>
    </subcellularLocation>
</comment>
<comment type="similarity">
    <text evidence="1">Belongs to the class-I aminoacyl-tRNA synthetase family.</text>
</comment>
<gene>
    <name evidence="1" type="primary">leuS</name>
    <name type="ordered locus">BCAN_A1845</name>
</gene>
<feature type="chain" id="PRO_1000074825" description="Leucine--tRNA ligase">
    <location>
        <begin position="1"/>
        <end position="877"/>
    </location>
</feature>
<feature type="short sequence motif" description="'HIGH' region">
    <location>
        <begin position="43"/>
        <end position="53"/>
    </location>
</feature>
<feature type="short sequence motif" description="'KMSKS' region">
    <location>
        <begin position="628"/>
        <end position="632"/>
    </location>
</feature>
<feature type="binding site" evidence="1">
    <location>
        <position position="631"/>
    </location>
    <ligand>
        <name>ATP</name>
        <dbReference type="ChEBI" id="CHEBI:30616"/>
    </ligand>
</feature>
<proteinExistence type="inferred from homology"/>
<protein>
    <recommendedName>
        <fullName evidence="1">Leucine--tRNA ligase</fullName>
        <ecNumber evidence="1">6.1.1.4</ecNumber>
    </recommendedName>
    <alternativeName>
        <fullName evidence="1">Leucyl-tRNA synthetase</fullName>
        <shortName evidence="1">LeuRS</shortName>
    </alternativeName>
</protein>